<keyword id="KW-0067">ATP-binding</keyword>
<keyword id="KW-0963">Cytoplasm</keyword>
<keyword id="KW-0418">Kinase</keyword>
<keyword id="KW-0547">Nucleotide-binding</keyword>
<keyword id="KW-0665">Pyrimidine biosynthesis</keyword>
<keyword id="KW-0808">Transferase</keyword>
<reference key="1">
    <citation type="journal article" date="2007" name="Photosyn. Res.">
        <title>Complete nucleotide sequence of the freshwater unicellular cyanobacterium Synechococcus elongatus PCC 6301 chromosome: gene content and organization.</title>
        <authorList>
            <person name="Sugita C."/>
            <person name="Ogata K."/>
            <person name="Shikata M."/>
            <person name="Jikuya H."/>
            <person name="Takano J."/>
            <person name="Furumichi M."/>
            <person name="Kanehisa M."/>
            <person name="Omata T."/>
            <person name="Sugiura M."/>
            <person name="Sugita M."/>
        </authorList>
    </citation>
    <scope>NUCLEOTIDE SEQUENCE [LARGE SCALE GENOMIC DNA]</scope>
    <source>
        <strain>ATCC 27144 / PCC 6301 / SAUG 1402/1</strain>
    </source>
</reference>
<comment type="function">
    <text evidence="1">Catalyzes the reversible phosphorylation of UMP to UDP.</text>
</comment>
<comment type="catalytic activity">
    <reaction evidence="1">
        <text>UMP + ATP = UDP + ADP</text>
        <dbReference type="Rhea" id="RHEA:24400"/>
        <dbReference type="ChEBI" id="CHEBI:30616"/>
        <dbReference type="ChEBI" id="CHEBI:57865"/>
        <dbReference type="ChEBI" id="CHEBI:58223"/>
        <dbReference type="ChEBI" id="CHEBI:456216"/>
        <dbReference type="EC" id="2.7.4.22"/>
    </reaction>
</comment>
<comment type="activity regulation">
    <text evidence="1">Inhibited by UTP.</text>
</comment>
<comment type="pathway">
    <text evidence="1">Pyrimidine metabolism; CTP biosynthesis via de novo pathway; UDP from UMP (UMPK route): step 1/1.</text>
</comment>
<comment type="subunit">
    <text evidence="1">Homohexamer.</text>
</comment>
<comment type="subcellular location">
    <subcellularLocation>
        <location evidence="1">Cytoplasm</location>
    </subcellularLocation>
</comment>
<comment type="similarity">
    <text evidence="1">Belongs to the UMP kinase family.</text>
</comment>
<comment type="sequence caution" evidence="2">
    <conflict type="erroneous initiation">
        <sequence resource="EMBL-CDS" id="BAD79204"/>
    </conflict>
</comment>
<protein>
    <recommendedName>
        <fullName evidence="1">Uridylate kinase</fullName>
        <shortName evidence="1">UK</shortName>
        <ecNumber evidence="1">2.7.4.22</ecNumber>
    </recommendedName>
    <alternativeName>
        <fullName evidence="1">Uridine monophosphate kinase</fullName>
        <shortName evidence="1">UMP kinase</shortName>
        <shortName evidence="1">UMPK</shortName>
    </alternativeName>
</protein>
<organism>
    <name type="scientific">Synechococcus sp. (strain ATCC 27144 / PCC 6301 / SAUG 1402/1)</name>
    <name type="common">Anacystis nidulans</name>
    <dbReference type="NCBI Taxonomy" id="269084"/>
    <lineage>
        <taxon>Bacteria</taxon>
        <taxon>Bacillati</taxon>
        <taxon>Cyanobacteriota</taxon>
        <taxon>Cyanophyceae</taxon>
        <taxon>Synechococcales</taxon>
        <taxon>Synechococcaceae</taxon>
        <taxon>Synechococcus</taxon>
    </lineage>
</organism>
<sequence>MAYKRVLLKLSGEALMGDASYGIDPAVVQRIAQEIATVVQDGFQVAIVVGGGNIFRGIKGAAAGMERATADYVGMIATVMNAITLQDALEQLQVPTRVQTAIAMQEVAEPYIRRRAIRHLEKGRVVIFGSGTGNPFFTTDTTAALRAAEINADVVFKATKVDGVYDSDPKLNPQARRFTTLNYNYVLNHELGVMDSTAIALCKDNSIPIVVFDLFGEGNIRRAVQGEDIGTTVGGSCEVS</sequence>
<proteinExistence type="inferred from homology"/>
<dbReference type="EC" id="2.7.4.22" evidence="1"/>
<dbReference type="EMBL" id="AP008231">
    <property type="protein sequence ID" value="BAD79204.1"/>
    <property type="status" value="ALT_INIT"/>
    <property type="molecule type" value="Genomic_DNA"/>
</dbReference>
<dbReference type="RefSeq" id="WP_039755415.1">
    <property type="nucleotide sequence ID" value="NZ_CP085785.1"/>
</dbReference>
<dbReference type="SMR" id="Q5N3B6"/>
<dbReference type="GeneID" id="72429329"/>
<dbReference type="KEGG" id="syc:syc1014_c"/>
<dbReference type="eggNOG" id="COG0528">
    <property type="taxonomic scope" value="Bacteria"/>
</dbReference>
<dbReference type="UniPathway" id="UPA00159">
    <property type="reaction ID" value="UER00275"/>
</dbReference>
<dbReference type="Proteomes" id="UP000001175">
    <property type="component" value="Chromosome"/>
</dbReference>
<dbReference type="GO" id="GO:0005737">
    <property type="term" value="C:cytoplasm"/>
    <property type="evidence" value="ECO:0007669"/>
    <property type="project" value="UniProtKB-SubCell"/>
</dbReference>
<dbReference type="GO" id="GO:0005524">
    <property type="term" value="F:ATP binding"/>
    <property type="evidence" value="ECO:0007669"/>
    <property type="project" value="UniProtKB-KW"/>
</dbReference>
<dbReference type="GO" id="GO:0033862">
    <property type="term" value="F:UMP kinase activity"/>
    <property type="evidence" value="ECO:0007669"/>
    <property type="project" value="UniProtKB-EC"/>
</dbReference>
<dbReference type="GO" id="GO:0044210">
    <property type="term" value="P:'de novo' CTP biosynthetic process"/>
    <property type="evidence" value="ECO:0007669"/>
    <property type="project" value="UniProtKB-UniRule"/>
</dbReference>
<dbReference type="GO" id="GO:0006225">
    <property type="term" value="P:UDP biosynthetic process"/>
    <property type="evidence" value="ECO:0007669"/>
    <property type="project" value="TreeGrafter"/>
</dbReference>
<dbReference type="CDD" id="cd04254">
    <property type="entry name" value="AAK_UMPK-PyrH-Ec"/>
    <property type="match status" value="1"/>
</dbReference>
<dbReference type="FunFam" id="3.40.1160.10:FF:000001">
    <property type="entry name" value="Uridylate kinase"/>
    <property type="match status" value="1"/>
</dbReference>
<dbReference type="Gene3D" id="3.40.1160.10">
    <property type="entry name" value="Acetylglutamate kinase-like"/>
    <property type="match status" value="1"/>
</dbReference>
<dbReference type="HAMAP" id="MF_01220_B">
    <property type="entry name" value="PyrH_B"/>
    <property type="match status" value="1"/>
</dbReference>
<dbReference type="InterPro" id="IPR036393">
    <property type="entry name" value="AceGlu_kinase-like_sf"/>
</dbReference>
<dbReference type="InterPro" id="IPR001048">
    <property type="entry name" value="Asp/Glu/Uridylate_kinase"/>
</dbReference>
<dbReference type="InterPro" id="IPR011817">
    <property type="entry name" value="Uridylate_kinase"/>
</dbReference>
<dbReference type="InterPro" id="IPR015963">
    <property type="entry name" value="Uridylate_kinase_bac"/>
</dbReference>
<dbReference type="NCBIfam" id="TIGR02075">
    <property type="entry name" value="pyrH_bact"/>
    <property type="match status" value="1"/>
</dbReference>
<dbReference type="PANTHER" id="PTHR42833">
    <property type="entry name" value="URIDYLATE KINASE"/>
    <property type="match status" value="1"/>
</dbReference>
<dbReference type="PANTHER" id="PTHR42833:SF4">
    <property type="entry name" value="URIDYLATE KINASE PUMPKIN, CHLOROPLASTIC"/>
    <property type="match status" value="1"/>
</dbReference>
<dbReference type="Pfam" id="PF00696">
    <property type="entry name" value="AA_kinase"/>
    <property type="match status" value="1"/>
</dbReference>
<dbReference type="PIRSF" id="PIRSF005650">
    <property type="entry name" value="Uridylate_kin"/>
    <property type="match status" value="1"/>
</dbReference>
<dbReference type="SUPFAM" id="SSF53633">
    <property type="entry name" value="Carbamate kinase-like"/>
    <property type="match status" value="1"/>
</dbReference>
<accession>Q5N3B6</accession>
<name>PYRH_SYNP6</name>
<feature type="chain" id="PRO_0000323962" description="Uridylate kinase">
    <location>
        <begin position="1"/>
        <end position="240"/>
    </location>
</feature>
<feature type="binding site" evidence="1">
    <location>
        <begin position="9"/>
        <end position="12"/>
    </location>
    <ligand>
        <name>ATP</name>
        <dbReference type="ChEBI" id="CHEBI:30616"/>
    </ligand>
</feature>
<feature type="binding site" evidence="1">
    <location>
        <position position="51"/>
    </location>
    <ligand>
        <name>UMP</name>
        <dbReference type="ChEBI" id="CHEBI:57865"/>
    </ligand>
</feature>
<feature type="binding site" evidence="1">
    <location>
        <position position="52"/>
    </location>
    <ligand>
        <name>ATP</name>
        <dbReference type="ChEBI" id="CHEBI:30616"/>
    </ligand>
</feature>
<feature type="binding site" evidence="1">
    <location>
        <position position="56"/>
    </location>
    <ligand>
        <name>ATP</name>
        <dbReference type="ChEBI" id="CHEBI:30616"/>
    </ligand>
</feature>
<feature type="binding site" evidence="1">
    <location>
        <position position="71"/>
    </location>
    <ligand>
        <name>UMP</name>
        <dbReference type="ChEBI" id="CHEBI:57865"/>
    </ligand>
</feature>
<feature type="binding site" evidence="1">
    <location>
        <begin position="132"/>
        <end position="139"/>
    </location>
    <ligand>
        <name>UMP</name>
        <dbReference type="ChEBI" id="CHEBI:57865"/>
    </ligand>
</feature>
<feature type="binding site" evidence="1">
    <location>
        <position position="159"/>
    </location>
    <ligand>
        <name>ATP</name>
        <dbReference type="ChEBI" id="CHEBI:30616"/>
    </ligand>
</feature>
<feature type="binding site" evidence="1">
    <location>
        <position position="165"/>
    </location>
    <ligand>
        <name>ATP</name>
        <dbReference type="ChEBI" id="CHEBI:30616"/>
    </ligand>
</feature>
<feature type="binding site" evidence="1">
    <location>
        <position position="168"/>
    </location>
    <ligand>
        <name>ATP</name>
        <dbReference type="ChEBI" id="CHEBI:30616"/>
    </ligand>
</feature>
<evidence type="ECO:0000255" key="1">
    <source>
        <dbReference type="HAMAP-Rule" id="MF_01220"/>
    </source>
</evidence>
<evidence type="ECO:0000305" key="2"/>
<gene>
    <name evidence="1" type="primary">pyrH</name>
    <name type="ordered locus">syc1014_c</name>
</gene>